<sequence length="886" mass="100935">MSGTEEDLCHRMKVVVRVRPENTKEKAVQFCKVVHVVDKHILSFDPKQEEISFFHRKKTTNFDITKRQNKDLKFVFDAVFDETSTQMEVFEHTTKPILHSFLNGYNCTVFAYGATGSGKTHTMLGSAAEPGVMYLTMLDLFKCIDEIKEEKECSTAVSYLEVYNEQIRDLLTNSGPLAVREDSQKGVVVQGLTLHQPKSSEEILQLLDNGNKNRTQHPTDVNAVSSRSHAVFQIYLRQQDKTASINQNVRIAKMSLIDLAGSERASVSGAKGSRFVEGTNINKSLLALGNVINALANTKRRNQHIPYRNSKLTRLLKDSLGGNCQTIMIAAVSPSSLFYDDTYNTLKYANRAKEIKSSLKSNVLNLNSHISQYVKICNMQKAEILMLKEKLKAYEEQKALSDRNDCAKLVHSNPEDRETERFQEILNCLFQNREGIRQEYLKLEMLLKANALKSSYHQQCHKQIEMMCSEDKVEKATCKRDHRLEKLKTNSCFLEKKKEEVSKQFDENTNWLHRVENEMRLLGQNGDIPEALNKELHCHHLHLQNKELKTQMAHMTALACLQEQQHKQTEAVLNALLPVLRKQYWKLKETGLSNAAFDSDFKDIEHLVERKKVVAWADQTNEHSNRNDLPGISLLMTFPQLEPIQSISCCTSVSDPNVLKLTPQRRTRRKIIPSPLKVQHTQKSALSESTQLNDSFSKELQPIVYTPEDCKKAQDLFPSLTRTSSQSANVMNDNSQKALCRIESPLSRTECKQGLYSTSTLCDSIRGLKNKWPEQEPLASSKSSVHRIESSSFSTKDSMPESAGVPSYMAMTTAAKRKWKQMSSTSNASIKSDESCGFAKRIRRDNSSVKPMQENRLKVGYKRNTNKTNSNMLRKFRRNTSKENVQ</sequence>
<accession>Q91WD7</accession>
<accession>Q3TP77</accession>
<accession>Q8BLL1</accession>
<evidence type="ECO:0000250" key="1"/>
<evidence type="ECO:0000250" key="2">
    <source>
        <dbReference type="UniProtKB" id="Q8NI77"/>
    </source>
</evidence>
<evidence type="ECO:0000255" key="3"/>
<evidence type="ECO:0000255" key="4">
    <source>
        <dbReference type="PROSITE-ProRule" id="PRU00283"/>
    </source>
</evidence>
<evidence type="ECO:0000256" key="5">
    <source>
        <dbReference type="SAM" id="MobiDB-lite"/>
    </source>
</evidence>
<name>KI18A_MOUSE</name>
<organism>
    <name type="scientific">Mus musculus</name>
    <name type="common">Mouse</name>
    <dbReference type="NCBI Taxonomy" id="10090"/>
    <lineage>
        <taxon>Eukaryota</taxon>
        <taxon>Metazoa</taxon>
        <taxon>Chordata</taxon>
        <taxon>Craniata</taxon>
        <taxon>Vertebrata</taxon>
        <taxon>Euteleostomi</taxon>
        <taxon>Mammalia</taxon>
        <taxon>Eutheria</taxon>
        <taxon>Euarchontoglires</taxon>
        <taxon>Glires</taxon>
        <taxon>Rodentia</taxon>
        <taxon>Myomorpha</taxon>
        <taxon>Muroidea</taxon>
        <taxon>Muridae</taxon>
        <taxon>Murinae</taxon>
        <taxon>Mus</taxon>
        <taxon>Mus</taxon>
    </lineage>
</organism>
<reference key="1">
    <citation type="journal article" date="2005" name="Science">
        <title>The transcriptional landscape of the mammalian genome.</title>
        <authorList>
            <person name="Carninci P."/>
            <person name="Kasukawa T."/>
            <person name="Katayama S."/>
            <person name="Gough J."/>
            <person name="Frith M.C."/>
            <person name="Maeda N."/>
            <person name="Oyama R."/>
            <person name="Ravasi T."/>
            <person name="Lenhard B."/>
            <person name="Wells C."/>
            <person name="Kodzius R."/>
            <person name="Shimokawa K."/>
            <person name="Bajic V.B."/>
            <person name="Brenner S.E."/>
            <person name="Batalov S."/>
            <person name="Forrest A.R."/>
            <person name="Zavolan M."/>
            <person name="Davis M.J."/>
            <person name="Wilming L.G."/>
            <person name="Aidinis V."/>
            <person name="Allen J.E."/>
            <person name="Ambesi-Impiombato A."/>
            <person name="Apweiler R."/>
            <person name="Aturaliya R.N."/>
            <person name="Bailey T.L."/>
            <person name="Bansal M."/>
            <person name="Baxter L."/>
            <person name="Beisel K.W."/>
            <person name="Bersano T."/>
            <person name="Bono H."/>
            <person name="Chalk A.M."/>
            <person name="Chiu K.P."/>
            <person name="Choudhary V."/>
            <person name="Christoffels A."/>
            <person name="Clutterbuck D.R."/>
            <person name="Crowe M.L."/>
            <person name="Dalla E."/>
            <person name="Dalrymple B.P."/>
            <person name="de Bono B."/>
            <person name="Della Gatta G."/>
            <person name="di Bernardo D."/>
            <person name="Down T."/>
            <person name="Engstrom P."/>
            <person name="Fagiolini M."/>
            <person name="Faulkner G."/>
            <person name="Fletcher C.F."/>
            <person name="Fukushima T."/>
            <person name="Furuno M."/>
            <person name="Futaki S."/>
            <person name="Gariboldi M."/>
            <person name="Georgii-Hemming P."/>
            <person name="Gingeras T.R."/>
            <person name="Gojobori T."/>
            <person name="Green R.E."/>
            <person name="Gustincich S."/>
            <person name="Harbers M."/>
            <person name="Hayashi Y."/>
            <person name="Hensch T.K."/>
            <person name="Hirokawa N."/>
            <person name="Hill D."/>
            <person name="Huminiecki L."/>
            <person name="Iacono M."/>
            <person name="Ikeo K."/>
            <person name="Iwama A."/>
            <person name="Ishikawa T."/>
            <person name="Jakt M."/>
            <person name="Kanapin A."/>
            <person name="Katoh M."/>
            <person name="Kawasawa Y."/>
            <person name="Kelso J."/>
            <person name="Kitamura H."/>
            <person name="Kitano H."/>
            <person name="Kollias G."/>
            <person name="Krishnan S.P."/>
            <person name="Kruger A."/>
            <person name="Kummerfeld S.K."/>
            <person name="Kurochkin I.V."/>
            <person name="Lareau L.F."/>
            <person name="Lazarevic D."/>
            <person name="Lipovich L."/>
            <person name="Liu J."/>
            <person name="Liuni S."/>
            <person name="McWilliam S."/>
            <person name="Madan Babu M."/>
            <person name="Madera M."/>
            <person name="Marchionni L."/>
            <person name="Matsuda H."/>
            <person name="Matsuzawa S."/>
            <person name="Miki H."/>
            <person name="Mignone F."/>
            <person name="Miyake S."/>
            <person name="Morris K."/>
            <person name="Mottagui-Tabar S."/>
            <person name="Mulder N."/>
            <person name="Nakano N."/>
            <person name="Nakauchi H."/>
            <person name="Ng P."/>
            <person name="Nilsson R."/>
            <person name="Nishiguchi S."/>
            <person name="Nishikawa S."/>
            <person name="Nori F."/>
            <person name="Ohara O."/>
            <person name="Okazaki Y."/>
            <person name="Orlando V."/>
            <person name="Pang K.C."/>
            <person name="Pavan W.J."/>
            <person name="Pavesi G."/>
            <person name="Pesole G."/>
            <person name="Petrovsky N."/>
            <person name="Piazza S."/>
            <person name="Reed J."/>
            <person name="Reid J.F."/>
            <person name="Ring B.Z."/>
            <person name="Ringwald M."/>
            <person name="Rost B."/>
            <person name="Ruan Y."/>
            <person name="Salzberg S.L."/>
            <person name="Sandelin A."/>
            <person name="Schneider C."/>
            <person name="Schoenbach C."/>
            <person name="Sekiguchi K."/>
            <person name="Semple C.A."/>
            <person name="Seno S."/>
            <person name="Sessa L."/>
            <person name="Sheng Y."/>
            <person name="Shibata Y."/>
            <person name="Shimada H."/>
            <person name="Shimada K."/>
            <person name="Silva D."/>
            <person name="Sinclair B."/>
            <person name="Sperling S."/>
            <person name="Stupka E."/>
            <person name="Sugiura K."/>
            <person name="Sultana R."/>
            <person name="Takenaka Y."/>
            <person name="Taki K."/>
            <person name="Tammoja K."/>
            <person name="Tan S.L."/>
            <person name="Tang S."/>
            <person name="Taylor M.S."/>
            <person name="Tegner J."/>
            <person name="Teichmann S.A."/>
            <person name="Ueda H.R."/>
            <person name="van Nimwegen E."/>
            <person name="Verardo R."/>
            <person name="Wei C.L."/>
            <person name="Yagi K."/>
            <person name="Yamanishi H."/>
            <person name="Zabarovsky E."/>
            <person name="Zhu S."/>
            <person name="Zimmer A."/>
            <person name="Hide W."/>
            <person name="Bult C."/>
            <person name="Grimmond S.M."/>
            <person name="Teasdale R.D."/>
            <person name="Liu E.T."/>
            <person name="Brusic V."/>
            <person name="Quackenbush J."/>
            <person name="Wahlestedt C."/>
            <person name="Mattick J.S."/>
            <person name="Hume D.A."/>
            <person name="Kai C."/>
            <person name="Sasaki D."/>
            <person name="Tomaru Y."/>
            <person name="Fukuda S."/>
            <person name="Kanamori-Katayama M."/>
            <person name="Suzuki M."/>
            <person name="Aoki J."/>
            <person name="Arakawa T."/>
            <person name="Iida J."/>
            <person name="Imamura K."/>
            <person name="Itoh M."/>
            <person name="Kato T."/>
            <person name="Kawaji H."/>
            <person name="Kawagashira N."/>
            <person name="Kawashima T."/>
            <person name="Kojima M."/>
            <person name="Kondo S."/>
            <person name="Konno H."/>
            <person name="Nakano K."/>
            <person name="Ninomiya N."/>
            <person name="Nishio T."/>
            <person name="Okada M."/>
            <person name="Plessy C."/>
            <person name="Shibata K."/>
            <person name="Shiraki T."/>
            <person name="Suzuki S."/>
            <person name="Tagami M."/>
            <person name="Waki K."/>
            <person name="Watahiki A."/>
            <person name="Okamura-Oho Y."/>
            <person name="Suzuki H."/>
            <person name="Kawai J."/>
            <person name="Hayashizaki Y."/>
        </authorList>
    </citation>
    <scope>NUCLEOTIDE SEQUENCE [LARGE SCALE MRNA]</scope>
    <source>
        <strain>C57BL/6J</strain>
        <tissue>Embryo</tissue>
        <tissue>Stomach</tissue>
    </source>
</reference>
<reference key="2">
    <citation type="journal article" date="2004" name="Genome Res.">
        <title>The status, quality, and expansion of the NIH full-length cDNA project: the Mammalian Gene Collection (MGC).</title>
        <authorList>
            <consortium name="The MGC Project Team"/>
        </authorList>
    </citation>
    <scope>NUCLEOTIDE SEQUENCE [LARGE SCALE MRNA]</scope>
    <source>
        <tissue>Eye</tissue>
    </source>
</reference>
<proteinExistence type="evidence at transcript level"/>
<protein>
    <recommendedName>
        <fullName>Kinesin-like protein KIF18A</fullName>
    </recommendedName>
</protein>
<gene>
    <name type="primary">Kif18a</name>
</gene>
<comment type="function">
    <text evidence="1">Microtubule-depolymerizing kinesin which plays a role in chromosome congression by reducing the amplitude of preanaphase oscillations and slowing poleward movement during anaphase, thus suppressing chromosome movements. May stabilize the CENPE-BUB1B complex at the kinetochores during early mitosis and maintains CENPE levels at kinetochores during chromosome congression (By similarity).</text>
</comment>
<comment type="subunit">
    <text evidence="1">Interacts with CENPE and ESR1.</text>
</comment>
<comment type="subcellular location">
    <subcellularLocation>
        <location evidence="1">Cell projection</location>
        <location evidence="1">Ruffle</location>
    </subcellularLocation>
    <subcellularLocation>
        <location evidence="1">Cytoplasm</location>
    </subcellularLocation>
    <subcellularLocation>
        <location evidence="1">Nucleus</location>
    </subcellularLocation>
    <subcellularLocation>
        <location evidence="1">Cytoplasm</location>
        <location evidence="1">Cytoskeleton</location>
        <location evidence="1">Microtubule organizing center</location>
        <location evidence="1">Centrosome</location>
    </subcellularLocation>
</comment>
<comment type="PTM">
    <text evidence="1">Glycosylated.</text>
</comment>
<comment type="PTM">
    <text evidence="1">Ubiquitinated.</text>
</comment>
<comment type="similarity">
    <text evidence="4">Belongs to the TRAFAC class myosin-kinesin ATPase superfamily. Kinesin family.</text>
</comment>
<dbReference type="EMBL" id="AK044795">
    <property type="protein sequence ID" value="BAC32095.2"/>
    <property type="molecule type" value="mRNA"/>
</dbReference>
<dbReference type="EMBL" id="AK164649">
    <property type="protein sequence ID" value="BAE37860.1"/>
    <property type="molecule type" value="mRNA"/>
</dbReference>
<dbReference type="EMBL" id="BC016095">
    <property type="protein sequence ID" value="AAH16095.1"/>
    <property type="molecule type" value="mRNA"/>
</dbReference>
<dbReference type="CCDS" id="CCDS16507.1"/>
<dbReference type="RefSeq" id="NP_647464.1">
    <property type="nucleotide sequence ID" value="NM_139303.2"/>
</dbReference>
<dbReference type="SMR" id="Q91WD7"/>
<dbReference type="BioGRID" id="230733">
    <property type="interactions" value="11"/>
</dbReference>
<dbReference type="FunCoup" id="Q91WD7">
    <property type="interactions" value="1372"/>
</dbReference>
<dbReference type="IntAct" id="Q91WD7">
    <property type="interactions" value="8"/>
</dbReference>
<dbReference type="STRING" id="10090.ENSMUSP00000028527"/>
<dbReference type="BindingDB" id="Q91WD7"/>
<dbReference type="ChEMBL" id="CHEMBL5291576"/>
<dbReference type="iPTMnet" id="Q91WD7"/>
<dbReference type="PhosphoSitePlus" id="Q91WD7"/>
<dbReference type="PaxDb" id="10090-ENSMUSP00000028527"/>
<dbReference type="PeptideAtlas" id="Q91WD7"/>
<dbReference type="ProteomicsDB" id="269215"/>
<dbReference type="Antibodypedia" id="25467">
    <property type="antibodies" value="138 antibodies from 25 providers"/>
</dbReference>
<dbReference type="DNASU" id="228421"/>
<dbReference type="Ensembl" id="ENSMUST00000028527.8">
    <property type="protein sequence ID" value="ENSMUSP00000028527.8"/>
    <property type="gene ID" value="ENSMUSG00000027115.15"/>
</dbReference>
<dbReference type="GeneID" id="228421"/>
<dbReference type="KEGG" id="mmu:228421"/>
<dbReference type="UCSC" id="uc008lmb.1">
    <property type="organism name" value="mouse"/>
</dbReference>
<dbReference type="AGR" id="MGI:2446977"/>
<dbReference type="CTD" id="81930"/>
<dbReference type="MGI" id="MGI:2446977">
    <property type="gene designation" value="Kif18a"/>
</dbReference>
<dbReference type="VEuPathDB" id="HostDB:ENSMUSG00000027115"/>
<dbReference type="eggNOG" id="KOG0242">
    <property type="taxonomic scope" value="Eukaryota"/>
</dbReference>
<dbReference type="GeneTree" id="ENSGT00940000159058"/>
<dbReference type="HOGENOM" id="CLU_001485_21_5_1"/>
<dbReference type="InParanoid" id="Q91WD7"/>
<dbReference type="OMA" id="QPMMSAV"/>
<dbReference type="OrthoDB" id="3176171at2759"/>
<dbReference type="PhylomeDB" id="Q91WD7"/>
<dbReference type="TreeFam" id="TF105231"/>
<dbReference type="Reactome" id="R-MMU-141444">
    <property type="pathway name" value="Amplification of signal from unattached kinetochores via a MAD2 inhibitory signal"/>
</dbReference>
<dbReference type="Reactome" id="R-MMU-2132295">
    <property type="pathway name" value="MHC class II antigen presentation"/>
</dbReference>
<dbReference type="Reactome" id="R-MMU-2467813">
    <property type="pathway name" value="Separation of Sister Chromatids"/>
</dbReference>
<dbReference type="Reactome" id="R-MMU-2500257">
    <property type="pathway name" value="Resolution of Sister Chromatid Cohesion"/>
</dbReference>
<dbReference type="Reactome" id="R-MMU-5663220">
    <property type="pathway name" value="RHO GTPases Activate Formins"/>
</dbReference>
<dbReference type="Reactome" id="R-MMU-6811434">
    <property type="pathway name" value="COPI-dependent Golgi-to-ER retrograde traffic"/>
</dbReference>
<dbReference type="Reactome" id="R-MMU-68877">
    <property type="pathway name" value="Mitotic Prometaphase"/>
</dbReference>
<dbReference type="Reactome" id="R-MMU-9648025">
    <property type="pathway name" value="EML4 and NUDC in mitotic spindle formation"/>
</dbReference>
<dbReference type="Reactome" id="R-MMU-983189">
    <property type="pathway name" value="Kinesins"/>
</dbReference>
<dbReference type="BioGRID-ORCS" id="228421">
    <property type="hits" value="13 hits in 77 CRISPR screens"/>
</dbReference>
<dbReference type="ChiTaRS" id="Kif18a">
    <property type="organism name" value="mouse"/>
</dbReference>
<dbReference type="PRO" id="PR:Q91WD7"/>
<dbReference type="Proteomes" id="UP000000589">
    <property type="component" value="Chromosome 2"/>
</dbReference>
<dbReference type="RNAct" id="Q91WD7">
    <property type="molecule type" value="protein"/>
</dbReference>
<dbReference type="Bgee" id="ENSMUSG00000027115">
    <property type="expression patterns" value="Expressed in animal zygote and 173 other cell types or tissues"/>
</dbReference>
<dbReference type="GO" id="GO:0005901">
    <property type="term" value="C:caveola"/>
    <property type="evidence" value="ECO:0000250"/>
    <property type="project" value="UniProtKB"/>
</dbReference>
<dbReference type="GO" id="GO:0005813">
    <property type="term" value="C:centrosome"/>
    <property type="evidence" value="ECO:0007669"/>
    <property type="project" value="UniProtKB-SubCell"/>
</dbReference>
<dbReference type="GO" id="GO:0005737">
    <property type="term" value="C:cytoplasm"/>
    <property type="evidence" value="ECO:0000250"/>
    <property type="project" value="UniProtKB"/>
</dbReference>
<dbReference type="GO" id="GO:0000776">
    <property type="term" value="C:kinetochore"/>
    <property type="evidence" value="ECO:0000314"/>
    <property type="project" value="MGI"/>
</dbReference>
<dbReference type="GO" id="GO:0005828">
    <property type="term" value="C:kinetochore microtubule"/>
    <property type="evidence" value="ECO:0000250"/>
    <property type="project" value="UniProtKB"/>
</dbReference>
<dbReference type="GO" id="GO:1990023">
    <property type="term" value="C:mitotic spindle midzone"/>
    <property type="evidence" value="ECO:0000314"/>
    <property type="project" value="MGI"/>
</dbReference>
<dbReference type="GO" id="GO:0005634">
    <property type="term" value="C:nucleus"/>
    <property type="evidence" value="ECO:0000250"/>
    <property type="project" value="UniProtKB"/>
</dbReference>
<dbReference type="GO" id="GO:0001726">
    <property type="term" value="C:ruffle"/>
    <property type="evidence" value="ECO:0000250"/>
    <property type="project" value="UniProtKB"/>
</dbReference>
<dbReference type="GO" id="GO:0003779">
    <property type="term" value="F:actin binding"/>
    <property type="evidence" value="ECO:0000250"/>
    <property type="project" value="UniProtKB"/>
</dbReference>
<dbReference type="GO" id="GO:0005524">
    <property type="term" value="F:ATP binding"/>
    <property type="evidence" value="ECO:0007669"/>
    <property type="project" value="UniProtKB-KW"/>
</dbReference>
<dbReference type="GO" id="GO:0008017">
    <property type="term" value="F:microtubule binding"/>
    <property type="evidence" value="ECO:0000250"/>
    <property type="project" value="UniProtKB"/>
</dbReference>
<dbReference type="GO" id="GO:0051010">
    <property type="term" value="F:microtubule plus-end binding"/>
    <property type="evidence" value="ECO:0000250"/>
    <property type="project" value="UniProtKB"/>
</dbReference>
<dbReference type="GO" id="GO:0008574">
    <property type="term" value="F:plus-end-directed microtubule motor activity"/>
    <property type="evidence" value="ECO:0000250"/>
    <property type="project" value="UniProtKB"/>
</dbReference>
<dbReference type="GO" id="GO:0070463">
    <property type="term" value="F:tubulin-dependent ATPase activity"/>
    <property type="evidence" value="ECO:0000250"/>
    <property type="project" value="UniProtKB"/>
</dbReference>
<dbReference type="GO" id="GO:0071392">
    <property type="term" value="P:cellular response to estradiol stimulus"/>
    <property type="evidence" value="ECO:0007669"/>
    <property type="project" value="Ensembl"/>
</dbReference>
<dbReference type="GO" id="GO:0007140">
    <property type="term" value="P:male meiotic nuclear division"/>
    <property type="evidence" value="ECO:0000315"/>
    <property type="project" value="MGI"/>
</dbReference>
<dbReference type="GO" id="GO:0007019">
    <property type="term" value="P:microtubule depolymerization"/>
    <property type="evidence" value="ECO:0000250"/>
    <property type="project" value="UniProtKB"/>
</dbReference>
<dbReference type="GO" id="GO:0007018">
    <property type="term" value="P:microtubule-based movement"/>
    <property type="evidence" value="ECO:0007669"/>
    <property type="project" value="InterPro"/>
</dbReference>
<dbReference type="GO" id="GO:0007080">
    <property type="term" value="P:mitotic metaphase chromosome alignment"/>
    <property type="evidence" value="ECO:0000315"/>
    <property type="project" value="MGI"/>
</dbReference>
<dbReference type="GO" id="GO:0015031">
    <property type="term" value="P:protein transport"/>
    <property type="evidence" value="ECO:0007669"/>
    <property type="project" value="UniProtKB-KW"/>
</dbReference>
<dbReference type="GO" id="GO:0070507">
    <property type="term" value="P:regulation of microtubule cytoskeleton organization"/>
    <property type="evidence" value="ECO:0000315"/>
    <property type="project" value="MGI"/>
</dbReference>
<dbReference type="GO" id="GO:0072520">
    <property type="term" value="P:seminiferous tubule development"/>
    <property type="evidence" value="ECO:0000315"/>
    <property type="project" value="MGI"/>
</dbReference>
<dbReference type="CDD" id="cd01370">
    <property type="entry name" value="KISc_KIP3_like"/>
    <property type="match status" value="1"/>
</dbReference>
<dbReference type="FunFam" id="3.40.850.10:FF:000027">
    <property type="entry name" value="Kinesin-like protein"/>
    <property type="match status" value="1"/>
</dbReference>
<dbReference type="Gene3D" id="3.40.850.10">
    <property type="entry name" value="Kinesin motor domain"/>
    <property type="match status" value="1"/>
</dbReference>
<dbReference type="InterPro" id="IPR027640">
    <property type="entry name" value="Kinesin-like_fam"/>
</dbReference>
<dbReference type="InterPro" id="IPR019821">
    <property type="entry name" value="Kinesin_motor_CS"/>
</dbReference>
<dbReference type="InterPro" id="IPR001752">
    <property type="entry name" value="Kinesin_motor_dom"/>
</dbReference>
<dbReference type="InterPro" id="IPR036961">
    <property type="entry name" value="Kinesin_motor_dom_sf"/>
</dbReference>
<dbReference type="InterPro" id="IPR027417">
    <property type="entry name" value="P-loop_NTPase"/>
</dbReference>
<dbReference type="PANTHER" id="PTHR47968">
    <property type="entry name" value="CENTROMERE PROTEIN E"/>
    <property type="match status" value="1"/>
</dbReference>
<dbReference type="PANTHER" id="PTHR47968:SF73">
    <property type="entry name" value="KINESIN-LIKE PROTEIN"/>
    <property type="match status" value="1"/>
</dbReference>
<dbReference type="Pfam" id="PF00225">
    <property type="entry name" value="Kinesin"/>
    <property type="match status" value="1"/>
</dbReference>
<dbReference type="PRINTS" id="PR00380">
    <property type="entry name" value="KINESINHEAVY"/>
</dbReference>
<dbReference type="SMART" id="SM00129">
    <property type="entry name" value="KISc"/>
    <property type="match status" value="1"/>
</dbReference>
<dbReference type="SUPFAM" id="SSF52540">
    <property type="entry name" value="P-loop containing nucleoside triphosphate hydrolases"/>
    <property type="match status" value="1"/>
</dbReference>
<dbReference type="PROSITE" id="PS00411">
    <property type="entry name" value="KINESIN_MOTOR_1"/>
    <property type="match status" value="1"/>
</dbReference>
<dbReference type="PROSITE" id="PS50067">
    <property type="entry name" value="KINESIN_MOTOR_2"/>
    <property type="match status" value="1"/>
</dbReference>
<feature type="chain" id="PRO_0000125459" description="Kinesin-like protein KIF18A">
    <location>
        <begin position="1"/>
        <end position="886"/>
    </location>
</feature>
<feature type="domain" description="Kinesin motor" evidence="4">
    <location>
        <begin position="11"/>
        <end position="355"/>
    </location>
</feature>
<feature type="region of interest" description="Disordered" evidence="5">
    <location>
        <begin position="774"/>
        <end position="804"/>
    </location>
</feature>
<feature type="region of interest" description="Disordered" evidence="5">
    <location>
        <begin position="862"/>
        <end position="886"/>
    </location>
</feature>
<feature type="coiled-coil region" evidence="3">
    <location>
        <begin position="370"/>
        <end position="404"/>
    </location>
</feature>
<feature type="binding site" evidence="4">
    <location>
        <begin position="113"/>
        <end position="120"/>
    </location>
    <ligand>
        <name>ATP</name>
        <dbReference type="ChEBI" id="CHEBI:30616"/>
    </ligand>
</feature>
<feature type="modified residue" description="Phosphoserine" evidence="2">
    <location>
        <position position="674"/>
    </location>
</feature>
<feature type="modified residue" description="Phosphoserine" evidence="2">
    <location>
        <position position="695"/>
    </location>
</feature>
<feature type="modified residue" description="Phosphoserine" evidence="2">
    <location>
        <position position="826"/>
    </location>
</feature>
<feature type="cross-link" description="Glycyl lysine isopeptide (Lys-Gly) (interchain with G-Cter in SUMO2)" evidence="2">
    <location>
        <position position="24"/>
    </location>
</feature>
<feature type="cross-link" description="Glycyl lysine isopeptide (Lys-Gly) (interchain with G-Cter in SUMO2)" evidence="2">
    <location>
        <position position="683"/>
    </location>
</feature>
<feature type="cross-link" description="Glycyl lysine isopeptide (Lys-Gly) (interchain with G-Cter in SUMO2)" evidence="2">
    <location>
        <position position="782"/>
    </location>
</feature>
<feature type="cross-link" description="Glycyl lysine isopeptide (Lys-Gly) (interchain with G-Cter in SUMO2)" evidence="2">
    <location>
        <position position="862"/>
    </location>
</feature>
<keyword id="KW-0067">ATP-binding</keyword>
<keyword id="KW-0966">Cell projection</keyword>
<keyword id="KW-0175">Coiled coil</keyword>
<keyword id="KW-0963">Cytoplasm</keyword>
<keyword id="KW-0206">Cytoskeleton</keyword>
<keyword id="KW-0325">Glycoprotein</keyword>
<keyword id="KW-1017">Isopeptide bond</keyword>
<keyword id="KW-0493">Microtubule</keyword>
<keyword id="KW-0505">Motor protein</keyword>
<keyword id="KW-0547">Nucleotide-binding</keyword>
<keyword id="KW-0539">Nucleus</keyword>
<keyword id="KW-0597">Phosphoprotein</keyword>
<keyword id="KW-0653">Protein transport</keyword>
<keyword id="KW-1185">Reference proteome</keyword>
<keyword id="KW-0813">Transport</keyword>
<keyword id="KW-0832">Ubl conjugation</keyword>